<reference key="1">
    <citation type="journal article" date="2005" name="Nat. Biotechnol.">
        <title>Complete genome sequence of the acetic acid bacterium Gluconobacter oxydans.</title>
        <authorList>
            <person name="Prust C."/>
            <person name="Hoffmeister M."/>
            <person name="Liesegang H."/>
            <person name="Wiezer A."/>
            <person name="Fricke W.F."/>
            <person name="Ehrenreich A."/>
            <person name="Gottschalk G."/>
            <person name="Deppenmeier U."/>
        </authorList>
    </citation>
    <scope>NUCLEOTIDE SEQUENCE [LARGE SCALE GENOMIC DNA]</scope>
    <source>
        <strain>621H</strain>
    </source>
</reference>
<gene>
    <name evidence="1" type="primary">guaA</name>
    <name type="ordered locus">GOX1950</name>
</gene>
<feature type="chain" id="PRO_0000229432" description="GMP synthase [glutamine-hydrolyzing]">
    <location>
        <begin position="1"/>
        <end position="533"/>
    </location>
</feature>
<feature type="domain" description="Glutamine amidotransferase type-1" evidence="1">
    <location>
        <begin position="22"/>
        <end position="215"/>
    </location>
</feature>
<feature type="domain" description="GMPS ATP-PPase" evidence="1">
    <location>
        <begin position="216"/>
        <end position="408"/>
    </location>
</feature>
<feature type="active site" description="Nucleophile" evidence="1">
    <location>
        <position position="99"/>
    </location>
</feature>
<feature type="active site" evidence="1">
    <location>
        <position position="189"/>
    </location>
</feature>
<feature type="active site" evidence="1">
    <location>
        <position position="191"/>
    </location>
</feature>
<feature type="binding site" evidence="1">
    <location>
        <begin position="243"/>
        <end position="249"/>
    </location>
    <ligand>
        <name>ATP</name>
        <dbReference type="ChEBI" id="CHEBI:30616"/>
    </ligand>
</feature>
<accession>Q5FPL0</accession>
<evidence type="ECO:0000255" key="1">
    <source>
        <dbReference type="HAMAP-Rule" id="MF_00344"/>
    </source>
</evidence>
<dbReference type="EC" id="6.3.5.2" evidence="1"/>
<dbReference type="EMBL" id="CP000009">
    <property type="protein sequence ID" value="AAW61686.1"/>
    <property type="molecule type" value="Genomic_DNA"/>
</dbReference>
<dbReference type="RefSeq" id="WP_011253463.1">
    <property type="nucleotide sequence ID" value="NC_006677.1"/>
</dbReference>
<dbReference type="SMR" id="Q5FPL0"/>
<dbReference type="STRING" id="290633.GOX1950"/>
<dbReference type="KEGG" id="gox:GOX1950"/>
<dbReference type="eggNOG" id="COG0518">
    <property type="taxonomic scope" value="Bacteria"/>
</dbReference>
<dbReference type="eggNOG" id="COG0519">
    <property type="taxonomic scope" value="Bacteria"/>
</dbReference>
<dbReference type="HOGENOM" id="CLU_014340_0_5_5"/>
<dbReference type="UniPathway" id="UPA00189">
    <property type="reaction ID" value="UER00296"/>
</dbReference>
<dbReference type="Proteomes" id="UP000006375">
    <property type="component" value="Chromosome"/>
</dbReference>
<dbReference type="GO" id="GO:0005829">
    <property type="term" value="C:cytosol"/>
    <property type="evidence" value="ECO:0007669"/>
    <property type="project" value="TreeGrafter"/>
</dbReference>
<dbReference type="GO" id="GO:0005524">
    <property type="term" value="F:ATP binding"/>
    <property type="evidence" value="ECO:0007669"/>
    <property type="project" value="UniProtKB-UniRule"/>
</dbReference>
<dbReference type="GO" id="GO:0003921">
    <property type="term" value="F:GMP synthase activity"/>
    <property type="evidence" value="ECO:0007669"/>
    <property type="project" value="InterPro"/>
</dbReference>
<dbReference type="CDD" id="cd01742">
    <property type="entry name" value="GATase1_GMP_Synthase"/>
    <property type="match status" value="1"/>
</dbReference>
<dbReference type="CDD" id="cd01997">
    <property type="entry name" value="GMP_synthase_C"/>
    <property type="match status" value="1"/>
</dbReference>
<dbReference type="FunFam" id="3.30.300.10:FF:000002">
    <property type="entry name" value="GMP synthase [glutamine-hydrolyzing]"/>
    <property type="match status" value="1"/>
</dbReference>
<dbReference type="FunFam" id="3.40.50.620:FF:000001">
    <property type="entry name" value="GMP synthase [glutamine-hydrolyzing]"/>
    <property type="match status" value="1"/>
</dbReference>
<dbReference type="FunFam" id="3.40.50.880:FF:000001">
    <property type="entry name" value="GMP synthase [glutamine-hydrolyzing]"/>
    <property type="match status" value="1"/>
</dbReference>
<dbReference type="Gene3D" id="3.30.300.10">
    <property type="match status" value="1"/>
</dbReference>
<dbReference type="Gene3D" id="3.40.50.880">
    <property type="match status" value="1"/>
</dbReference>
<dbReference type="Gene3D" id="3.40.50.620">
    <property type="entry name" value="HUPs"/>
    <property type="match status" value="1"/>
</dbReference>
<dbReference type="HAMAP" id="MF_00344">
    <property type="entry name" value="GMP_synthase"/>
    <property type="match status" value="1"/>
</dbReference>
<dbReference type="InterPro" id="IPR029062">
    <property type="entry name" value="Class_I_gatase-like"/>
</dbReference>
<dbReference type="InterPro" id="IPR017926">
    <property type="entry name" value="GATASE"/>
</dbReference>
<dbReference type="InterPro" id="IPR001674">
    <property type="entry name" value="GMP_synth_C"/>
</dbReference>
<dbReference type="InterPro" id="IPR004739">
    <property type="entry name" value="GMP_synth_GATase"/>
</dbReference>
<dbReference type="InterPro" id="IPR022955">
    <property type="entry name" value="GMP_synthase"/>
</dbReference>
<dbReference type="InterPro" id="IPR025777">
    <property type="entry name" value="GMPS_ATP_PPase_dom"/>
</dbReference>
<dbReference type="InterPro" id="IPR022310">
    <property type="entry name" value="NAD/GMP_synthase"/>
</dbReference>
<dbReference type="InterPro" id="IPR014729">
    <property type="entry name" value="Rossmann-like_a/b/a_fold"/>
</dbReference>
<dbReference type="NCBIfam" id="TIGR00884">
    <property type="entry name" value="guaA_Cterm"/>
    <property type="match status" value="1"/>
</dbReference>
<dbReference type="NCBIfam" id="TIGR00888">
    <property type="entry name" value="guaA_Nterm"/>
    <property type="match status" value="1"/>
</dbReference>
<dbReference type="NCBIfam" id="NF000848">
    <property type="entry name" value="PRK00074.1"/>
    <property type="match status" value="1"/>
</dbReference>
<dbReference type="PANTHER" id="PTHR11922:SF2">
    <property type="entry name" value="GMP SYNTHASE [GLUTAMINE-HYDROLYZING]"/>
    <property type="match status" value="1"/>
</dbReference>
<dbReference type="PANTHER" id="PTHR11922">
    <property type="entry name" value="GMP SYNTHASE-RELATED"/>
    <property type="match status" value="1"/>
</dbReference>
<dbReference type="Pfam" id="PF00117">
    <property type="entry name" value="GATase"/>
    <property type="match status" value="1"/>
</dbReference>
<dbReference type="Pfam" id="PF00958">
    <property type="entry name" value="GMP_synt_C"/>
    <property type="match status" value="1"/>
</dbReference>
<dbReference type="Pfam" id="PF02540">
    <property type="entry name" value="NAD_synthase"/>
    <property type="match status" value="1"/>
</dbReference>
<dbReference type="PRINTS" id="PR00097">
    <property type="entry name" value="ANTSNTHASEII"/>
</dbReference>
<dbReference type="PRINTS" id="PR00096">
    <property type="entry name" value="GATASE"/>
</dbReference>
<dbReference type="SUPFAM" id="SSF52402">
    <property type="entry name" value="Adenine nucleotide alpha hydrolases-like"/>
    <property type="match status" value="1"/>
</dbReference>
<dbReference type="SUPFAM" id="SSF52317">
    <property type="entry name" value="Class I glutamine amidotransferase-like"/>
    <property type="match status" value="1"/>
</dbReference>
<dbReference type="SUPFAM" id="SSF54810">
    <property type="entry name" value="GMP synthetase C-terminal dimerisation domain"/>
    <property type="match status" value="1"/>
</dbReference>
<dbReference type="PROSITE" id="PS51273">
    <property type="entry name" value="GATASE_TYPE_1"/>
    <property type="match status" value="1"/>
</dbReference>
<dbReference type="PROSITE" id="PS51553">
    <property type="entry name" value="GMPS_ATP_PPASE"/>
    <property type="match status" value="1"/>
</dbReference>
<keyword id="KW-0067">ATP-binding</keyword>
<keyword id="KW-0315">Glutamine amidotransferase</keyword>
<keyword id="KW-0332">GMP biosynthesis</keyword>
<keyword id="KW-0436">Ligase</keyword>
<keyword id="KW-0547">Nucleotide-binding</keyword>
<keyword id="KW-0658">Purine biosynthesis</keyword>
<keyword id="KW-1185">Reference proteome</keyword>
<name>GUAA_GLUOX</name>
<protein>
    <recommendedName>
        <fullName evidence="1">GMP synthase [glutamine-hydrolyzing]</fullName>
        <ecNumber evidence="1">6.3.5.2</ecNumber>
    </recommendedName>
    <alternativeName>
        <fullName evidence="1">GMP synthetase</fullName>
    </alternativeName>
    <alternativeName>
        <fullName evidence="1">Glutamine amidotransferase</fullName>
    </alternativeName>
</protein>
<sequence>MTLTQQDASTVEKLDETLHEDRILILDFGSQVTQLIARRVRESGVYCEIWPFTATEEKIRAFNPRGIILSGSPASVHDENAPPIPNVVFALNRPVLGICYGQQAMCQMLGGKVESHEHREFGRAYIDIAEDCSLFRGVWARGKREQVWMSHGDRVTQLPPGFRAVAHSEGAPFAIIADEGRRLYGVQFHPEVVHTPHGAALIRNFTHNVAGCSGTWTMAGFRELEIARIRKQVGSGRVICGLSGGVDSSVAAKLIHDAIGDQLTCIFVDPGIMRTGEADEVVKTFRGRFNIRLVHRDASELFLKELAGVTDPETKRKTIGRLFIEVFEEEAAKLGGAQFLAQGTLYPDVIESVSFSGGPSVTIKSHHNVGGLPDRMNMELVEPLRELFKDEVRMLGRELGIPESIVGRHPFPGPGLAIRIPGDVTKEKLDLLRKVDAIYLEEIRRAGLYDAIWQAFAVLLPVRTVGVMGDGRTYDQACALRAVTSTDGMTAEVYPFDFAFLNRVAGRIVNEVRGINRVTYDITSKPPGTIEWE</sequence>
<comment type="function">
    <text evidence="1">Catalyzes the synthesis of GMP from XMP.</text>
</comment>
<comment type="catalytic activity">
    <reaction evidence="1">
        <text>XMP + L-glutamine + ATP + H2O = GMP + L-glutamate + AMP + diphosphate + 2 H(+)</text>
        <dbReference type="Rhea" id="RHEA:11680"/>
        <dbReference type="ChEBI" id="CHEBI:15377"/>
        <dbReference type="ChEBI" id="CHEBI:15378"/>
        <dbReference type="ChEBI" id="CHEBI:29985"/>
        <dbReference type="ChEBI" id="CHEBI:30616"/>
        <dbReference type="ChEBI" id="CHEBI:33019"/>
        <dbReference type="ChEBI" id="CHEBI:57464"/>
        <dbReference type="ChEBI" id="CHEBI:58115"/>
        <dbReference type="ChEBI" id="CHEBI:58359"/>
        <dbReference type="ChEBI" id="CHEBI:456215"/>
        <dbReference type="EC" id="6.3.5.2"/>
    </reaction>
</comment>
<comment type="pathway">
    <text evidence="1">Purine metabolism; GMP biosynthesis; GMP from XMP (L-Gln route): step 1/1.</text>
</comment>
<comment type="subunit">
    <text evidence="1">Homodimer.</text>
</comment>
<organism>
    <name type="scientific">Gluconobacter oxydans (strain 621H)</name>
    <name type="common">Gluconobacter suboxydans</name>
    <dbReference type="NCBI Taxonomy" id="290633"/>
    <lineage>
        <taxon>Bacteria</taxon>
        <taxon>Pseudomonadati</taxon>
        <taxon>Pseudomonadota</taxon>
        <taxon>Alphaproteobacteria</taxon>
        <taxon>Acetobacterales</taxon>
        <taxon>Acetobacteraceae</taxon>
        <taxon>Gluconobacter</taxon>
    </lineage>
</organism>
<proteinExistence type="inferred from homology"/>